<feature type="chain" id="PRO_0000389537" description="Pregnancy-associated glycoprotein 61C">
    <location>
        <begin position="1"/>
        <end position="20" status="greater than"/>
    </location>
</feature>
<feature type="non-terminal residue" evidence="5">
    <location>
        <position position="20"/>
    </location>
</feature>
<keyword id="KW-0064">Aspartyl protease</keyword>
<keyword id="KW-0903">Direct protein sequencing</keyword>
<keyword id="KW-0325">Glycoprotein</keyword>
<keyword id="KW-0378">Hydrolase</keyword>
<keyword id="KW-0645">Protease</keyword>
<keyword id="KW-0964">Secreted</keyword>
<evidence type="ECO:0000250" key="1">
    <source>
        <dbReference type="UniProtKB" id="P84918"/>
    </source>
</evidence>
<evidence type="ECO:0000250" key="2">
    <source>
        <dbReference type="UniProtKB" id="P85048"/>
    </source>
</evidence>
<evidence type="ECO:0000255" key="3"/>
<evidence type="ECO:0000269" key="4">
    <source>
    </source>
</evidence>
<evidence type="ECO:0000303" key="5">
    <source>
    </source>
</evidence>
<evidence type="ECO:0000305" key="6"/>
<protein>
    <recommendedName>
        <fullName evidence="5">Pregnancy-associated glycoprotein 61C</fullName>
        <ecNumber evidence="2">3.4.23.-</ecNumber>
    </recommendedName>
</protein>
<reference evidence="6" key="1">
    <citation type="journal article" date="2013" name="BMC Vet. Res.">
        <title>Purification of pregnancy-associated glycoproteins from late-pregnancy Bubalus bubalis placentas and development of a radioimmunoassay for pregnancy diagnosis in water buffalo females.</title>
        <authorList>
            <person name="Barbato O."/>
            <person name="Melo de Sousa N."/>
            <person name="Barile V.L."/>
            <person name="Canali C."/>
            <person name="Beckers J.F."/>
        </authorList>
    </citation>
    <scope>PROTEIN SEQUENCE</scope>
    <scope>TISSUE SPECIFICITY</scope>
    <scope>DEVELOPMENTAL STAGE</scope>
    <source>
        <tissue evidence="4">Fetal cotyledon</tissue>
    </source>
</reference>
<sequence length="20" mass="2315">RGSXLTILPLRNIRDIFYVG</sequence>
<proteinExistence type="evidence at protein level"/>
<organism>
    <name type="scientific">Bubalus bubalis</name>
    <name type="common">Domestic water buffalo</name>
    <dbReference type="NCBI Taxonomy" id="89462"/>
    <lineage>
        <taxon>Eukaryota</taxon>
        <taxon>Metazoa</taxon>
        <taxon>Chordata</taxon>
        <taxon>Craniata</taxon>
        <taxon>Vertebrata</taxon>
        <taxon>Euteleostomi</taxon>
        <taxon>Mammalia</taxon>
        <taxon>Eutheria</taxon>
        <taxon>Laurasiatheria</taxon>
        <taxon>Artiodactyla</taxon>
        <taxon>Ruminantia</taxon>
        <taxon>Pecora</taxon>
        <taxon>Bovidae</taxon>
        <taxon>Bovinae</taxon>
        <taxon>Bubalus</taxon>
    </lineage>
</organism>
<accession>P86374</accession>
<comment type="subcellular location">
    <subcellularLocation>
        <location evidence="2">Secreted</location>
        <location evidence="2">Extracellular space</location>
    </subcellularLocation>
</comment>
<comment type="tissue specificity">
    <text evidence="4">Expressed in chorionic epithelium (trophectoderm).</text>
</comment>
<comment type="developmental stage">
    <text evidence="4">Expressed during 8th month of pregnancy.</text>
</comment>
<comment type="PTM">
    <text evidence="1">N-glycosylated.</text>
</comment>
<comment type="similarity">
    <text evidence="3">Belongs to the peptidase A1 family.</text>
</comment>
<name>PA61C_BUBBU</name>
<dbReference type="EC" id="3.4.23.-" evidence="2"/>
<dbReference type="GO" id="GO:0005576">
    <property type="term" value="C:extracellular region"/>
    <property type="evidence" value="ECO:0007669"/>
    <property type="project" value="UniProtKB-SubCell"/>
</dbReference>
<dbReference type="GO" id="GO:0004190">
    <property type="term" value="F:aspartic-type endopeptidase activity"/>
    <property type="evidence" value="ECO:0007669"/>
    <property type="project" value="UniProtKB-KW"/>
</dbReference>
<dbReference type="GO" id="GO:0006508">
    <property type="term" value="P:proteolysis"/>
    <property type="evidence" value="ECO:0007669"/>
    <property type="project" value="UniProtKB-KW"/>
</dbReference>